<organism>
    <name type="scientific">Shewanella sediminis (strain HAW-EB3)</name>
    <dbReference type="NCBI Taxonomy" id="425104"/>
    <lineage>
        <taxon>Bacteria</taxon>
        <taxon>Pseudomonadati</taxon>
        <taxon>Pseudomonadota</taxon>
        <taxon>Gammaproteobacteria</taxon>
        <taxon>Alteromonadales</taxon>
        <taxon>Shewanellaceae</taxon>
        <taxon>Shewanella</taxon>
    </lineage>
</organism>
<keyword id="KW-0997">Cell inner membrane</keyword>
<keyword id="KW-1003">Cell membrane</keyword>
<keyword id="KW-0963">Cytoplasm</keyword>
<keyword id="KW-0472">Membrane</keyword>
<keyword id="KW-1185">Reference proteome</keyword>
<name>HFLD_SHESH</name>
<sequence>MSDQLIDRTMAFAGILQAVAQVQHIARHGNSDRDSLAACLNTVLVTNPDTTSDVYADKVALNKGYQLIINQLGDAKDKDVEVTRYLVGILALERKLARGNAMSILSERINQIHRQLHHFEITDEQVIANFAGIYSDIISTLGPKIQISGNPEYLKQSQVQEKIRALLLSAMRSAVLWRQLGGKRRHLVFARKTIVDTAKKSLTL</sequence>
<dbReference type="EMBL" id="CP000821">
    <property type="protein sequence ID" value="ABV36491.1"/>
    <property type="molecule type" value="Genomic_DNA"/>
</dbReference>
<dbReference type="RefSeq" id="WP_012142227.1">
    <property type="nucleotide sequence ID" value="NC_009831.1"/>
</dbReference>
<dbReference type="SMR" id="A8FUG8"/>
<dbReference type="STRING" id="425104.Ssed_1880"/>
<dbReference type="KEGG" id="sse:Ssed_1880"/>
<dbReference type="eggNOG" id="COG2915">
    <property type="taxonomic scope" value="Bacteria"/>
</dbReference>
<dbReference type="HOGENOM" id="CLU_098920_0_0_6"/>
<dbReference type="OrthoDB" id="9788031at2"/>
<dbReference type="Proteomes" id="UP000002015">
    <property type="component" value="Chromosome"/>
</dbReference>
<dbReference type="GO" id="GO:0005737">
    <property type="term" value="C:cytoplasm"/>
    <property type="evidence" value="ECO:0007669"/>
    <property type="project" value="UniProtKB-SubCell"/>
</dbReference>
<dbReference type="GO" id="GO:0005886">
    <property type="term" value="C:plasma membrane"/>
    <property type="evidence" value="ECO:0007669"/>
    <property type="project" value="UniProtKB-SubCell"/>
</dbReference>
<dbReference type="Gene3D" id="1.10.3890.10">
    <property type="entry name" value="HflD-like"/>
    <property type="match status" value="1"/>
</dbReference>
<dbReference type="HAMAP" id="MF_00695">
    <property type="entry name" value="HflD_protein"/>
    <property type="match status" value="1"/>
</dbReference>
<dbReference type="InterPro" id="IPR007451">
    <property type="entry name" value="HflD"/>
</dbReference>
<dbReference type="InterPro" id="IPR035932">
    <property type="entry name" value="HflD-like_sf"/>
</dbReference>
<dbReference type="NCBIfam" id="NF001246">
    <property type="entry name" value="PRK00218.1-2"/>
    <property type="match status" value="1"/>
</dbReference>
<dbReference type="NCBIfam" id="NF001248">
    <property type="entry name" value="PRK00218.1-4"/>
    <property type="match status" value="1"/>
</dbReference>
<dbReference type="PANTHER" id="PTHR38100">
    <property type="entry name" value="HIGH FREQUENCY LYSOGENIZATION PROTEIN HFLD"/>
    <property type="match status" value="1"/>
</dbReference>
<dbReference type="PANTHER" id="PTHR38100:SF1">
    <property type="entry name" value="HIGH FREQUENCY LYSOGENIZATION PROTEIN HFLD"/>
    <property type="match status" value="1"/>
</dbReference>
<dbReference type="Pfam" id="PF04356">
    <property type="entry name" value="DUF489"/>
    <property type="match status" value="1"/>
</dbReference>
<dbReference type="SUPFAM" id="SSF101322">
    <property type="entry name" value="YcfC-like"/>
    <property type="match status" value="1"/>
</dbReference>
<proteinExistence type="inferred from homology"/>
<accession>A8FUG8</accession>
<feature type="chain" id="PRO_1000083183" description="High frequency lysogenization protein HflD homolog">
    <location>
        <begin position="1"/>
        <end position="204"/>
    </location>
</feature>
<evidence type="ECO:0000255" key="1">
    <source>
        <dbReference type="HAMAP-Rule" id="MF_00695"/>
    </source>
</evidence>
<reference key="1">
    <citation type="submission" date="2007-08" db="EMBL/GenBank/DDBJ databases">
        <title>Complete sequence of Shewanella sediminis HAW-EB3.</title>
        <authorList>
            <consortium name="US DOE Joint Genome Institute"/>
            <person name="Copeland A."/>
            <person name="Lucas S."/>
            <person name="Lapidus A."/>
            <person name="Barry K."/>
            <person name="Glavina del Rio T."/>
            <person name="Dalin E."/>
            <person name="Tice H."/>
            <person name="Pitluck S."/>
            <person name="Chertkov O."/>
            <person name="Brettin T."/>
            <person name="Bruce D."/>
            <person name="Detter J.C."/>
            <person name="Han C."/>
            <person name="Schmutz J."/>
            <person name="Larimer F."/>
            <person name="Land M."/>
            <person name="Hauser L."/>
            <person name="Kyrpides N."/>
            <person name="Kim E."/>
            <person name="Zhao J.-S."/>
            <person name="Richardson P."/>
        </authorList>
    </citation>
    <scope>NUCLEOTIDE SEQUENCE [LARGE SCALE GENOMIC DNA]</scope>
    <source>
        <strain>HAW-EB3</strain>
    </source>
</reference>
<comment type="subcellular location">
    <subcellularLocation>
        <location>Cytoplasm</location>
    </subcellularLocation>
    <subcellularLocation>
        <location evidence="1">Cell inner membrane</location>
        <topology evidence="1">Peripheral membrane protein</topology>
        <orientation evidence="1">Cytoplasmic side</orientation>
    </subcellularLocation>
</comment>
<comment type="similarity">
    <text evidence="1">Belongs to the HflD family.</text>
</comment>
<protein>
    <recommendedName>
        <fullName evidence="1">High frequency lysogenization protein HflD homolog</fullName>
    </recommendedName>
</protein>
<gene>
    <name evidence="1" type="primary">hflD</name>
    <name type="ordered locus">Ssed_1880</name>
</gene>